<sequence>MESNADWGSRGGLPQAFLTPGISSFSEFLKGFAPEYLPSGRPLPGGLGSASAAGDIAPHGTTIVSIAFPGGVLLAGDRRATMGNFIAQRDIEKVFPADEFSAVGIAGSAGLAVEVVRLFQLELEHYEKIEGVTLSTDGKANRLATMIRGNLAMAMQGLAVVPLFAGYDEETGQGRIFSYDVTGGMYEEHDFYSVGSGSMFARGALKKLFRPDFTAEDAAVAAVQALYDAADDDSATGGPDLFRKIFPVVAVVTEDGYRRLPDEELSTLVESIMDARRVVPDGPRSPLR</sequence>
<keyword id="KW-0068">Autocatalytic cleavage</keyword>
<keyword id="KW-0963">Cytoplasm</keyword>
<keyword id="KW-0378">Hydrolase</keyword>
<keyword id="KW-0645">Protease</keyword>
<keyword id="KW-0647">Proteasome</keyword>
<keyword id="KW-1185">Reference proteome</keyword>
<keyword id="KW-0888">Threonine protease</keyword>
<keyword id="KW-0865">Zymogen</keyword>
<dbReference type="EC" id="3.4.25.1" evidence="1"/>
<dbReference type="EMBL" id="CP001700">
    <property type="protein sequence ID" value="ACU71344.1"/>
    <property type="molecule type" value="Genomic_DNA"/>
</dbReference>
<dbReference type="RefSeq" id="WP_012786637.1">
    <property type="nucleotide sequence ID" value="NC_013131.1"/>
</dbReference>
<dbReference type="SMR" id="C7PVV2"/>
<dbReference type="FunCoup" id="C7PVV2">
    <property type="interactions" value="269"/>
</dbReference>
<dbReference type="STRING" id="479433.Caci_2426"/>
<dbReference type="KEGG" id="cai:Caci_2426"/>
<dbReference type="eggNOG" id="COG0638">
    <property type="taxonomic scope" value="Bacteria"/>
</dbReference>
<dbReference type="HOGENOM" id="CLU_035750_2_0_11"/>
<dbReference type="InParanoid" id="C7PVV2"/>
<dbReference type="OrthoDB" id="5174038at2"/>
<dbReference type="UniPathway" id="UPA00997"/>
<dbReference type="Proteomes" id="UP000000851">
    <property type="component" value="Chromosome"/>
</dbReference>
<dbReference type="GO" id="GO:0005737">
    <property type="term" value="C:cytoplasm"/>
    <property type="evidence" value="ECO:0007669"/>
    <property type="project" value="UniProtKB-SubCell"/>
</dbReference>
<dbReference type="GO" id="GO:0019774">
    <property type="term" value="C:proteasome core complex, beta-subunit complex"/>
    <property type="evidence" value="ECO:0007669"/>
    <property type="project" value="UniProtKB-UniRule"/>
</dbReference>
<dbReference type="GO" id="GO:0004298">
    <property type="term" value="F:threonine-type endopeptidase activity"/>
    <property type="evidence" value="ECO:0007669"/>
    <property type="project" value="UniProtKB-UniRule"/>
</dbReference>
<dbReference type="GO" id="GO:0019941">
    <property type="term" value="P:modification-dependent protein catabolic process"/>
    <property type="evidence" value="ECO:0007669"/>
    <property type="project" value="UniProtKB-UniRule"/>
</dbReference>
<dbReference type="GO" id="GO:0010498">
    <property type="term" value="P:proteasomal protein catabolic process"/>
    <property type="evidence" value="ECO:0007669"/>
    <property type="project" value="UniProtKB-UniRule"/>
</dbReference>
<dbReference type="CDD" id="cd01906">
    <property type="entry name" value="proteasome_protease_HslV"/>
    <property type="match status" value="1"/>
</dbReference>
<dbReference type="Gene3D" id="3.60.20.10">
    <property type="entry name" value="Glutamine Phosphoribosylpyrophosphate, subunit 1, domain 1"/>
    <property type="match status" value="1"/>
</dbReference>
<dbReference type="HAMAP" id="MF_02113_B">
    <property type="entry name" value="Proteasome_B_B"/>
    <property type="match status" value="1"/>
</dbReference>
<dbReference type="InterPro" id="IPR029055">
    <property type="entry name" value="Ntn_hydrolases_N"/>
</dbReference>
<dbReference type="InterPro" id="IPR000243">
    <property type="entry name" value="Pept_T1A_subB"/>
</dbReference>
<dbReference type="InterPro" id="IPR001353">
    <property type="entry name" value="Proteasome_sua/b"/>
</dbReference>
<dbReference type="InterPro" id="IPR023333">
    <property type="entry name" value="Proteasome_suB-type"/>
</dbReference>
<dbReference type="InterPro" id="IPR022483">
    <property type="entry name" value="PSB_actinobac"/>
</dbReference>
<dbReference type="NCBIfam" id="TIGR03690">
    <property type="entry name" value="20S_bact_beta"/>
    <property type="match status" value="1"/>
</dbReference>
<dbReference type="PANTHER" id="PTHR32194:SF0">
    <property type="entry name" value="ATP-DEPENDENT PROTEASE SUBUNIT HSLV"/>
    <property type="match status" value="1"/>
</dbReference>
<dbReference type="PANTHER" id="PTHR32194">
    <property type="entry name" value="METALLOPROTEASE TLDD"/>
    <property type="match status" value="1"/>
</dbReference>
<dbReference type="Pfam" id="PF00227">
    <property type="entry name" value="Proteasome"/>
    <property type="match status" value="1"/>
</dbReference>
<dbReference type="PRINTS" id="PR00141">
    <property type="entry name" value="PROTEASOME"/>
</dbReference>
<dbReference type="SUPFAM" id="SSF56235">
    <property type="entry name" value="N-terminal nucleophile aminohydrolases (Ntn hydrolases)"/>
    <property type="match status" value="1"/>
</dbReference>
<dbReference type="PROSITE" id="PS51476">
    <property type="entry name" value="PROTEASOME_BETA_2"/>
    <property type="match status" value="1"/>
</dbReference>
<proteinExistence type="inferred from homology"/>
<feature type="propeptide" id="PRO_0000397502" description="Removed in mature form; by autocatalysis" evidence="1">
    <location>
        <begin position="1"/>
        <end position="60"/>
    </location>
</feature>
<feature type="chain" id="PRO_0000397503" description="Proteasome subunit beta">
    <location>
        <begin position="61"/>
        <end position="288"/>
    </location>
</feature>
<feature type="active site" description="Nucleophile" evidence="1">
    <location>
        <position position="61"/>
    </location>
</feature>
<comment type="function">
    <text evidence="1">Component of the proteasome core, a large protease complex with broad specificity involved in protein degradation.</text>
</comment>
<comment type="catalytic activity">
    <reaction evidence="1">
        <text>Cleavage of peptide bonds with very broad specificity.</text>
        <dbReference type="EC" id="3.4.25.1"/>
    </reaction>
</comment>
<comment type="activity regulation">
    <text evidence="1">The formation of the proteasomal ATPase ARC-20S proteasome complex, likely via the docking of the C-termini of ARC into the intersubunit pockets in the alpha-rings, may trigger opening of the gate for substrate entry. Interconversion between the open-gate and close-gate conformations leads to a dynamic regulation of the 20S proteasome proteolysis activity.</text>
</comment>
<comment type="pathway">
    <text evidence="1">Protein degradation; proteasomal Pup-dependent pathway.</text>
</comment>
<comment type="subunit">
    <text evidence="1">The 20S proteasome core is composed of 14 alpha and 14 beta subunits that assemble into four stacked heptameric rings, resulting in a barrel-shaped structure. The two inner rings, each composed of seven catalytic beta subunits, are sandwiched by two outer rings, each composed of seven alpha subunits. The catalytic chamber with the active sites is on the inside of the barrel. Has a gated structure, the ends of the cylinder being occluded by the N-termini of the alpha-subunits. Is capped by the proteasome-associated ATPase, ARC.</text>
</comment>
<comment type="subcellular location">
    <subcellularLocation>
        <location evidence="1">Cytoplasm</location>
    </subcellularLocation>
</comment>
<comment type="similarity">
    <text evidence="1">Belongs to the peptidase T1B family.</text>
</comment>
<name>PSB_CATAD</name>
<protein>
    <recommendedName>
        <fullName evidence="1">Proteasome subunit beta</fullName>
        <ecNumber evidence="1">3.4.25.1</ecNumber>
    </recommendedName>
    <alternativeName>
        <fullName evidence="1">20S proteasome beta subunit</fullName>
    </alternativeName>
    <alternativeName>
        <fullName evidence="1">Proteasome core protein PrcB</fullName>
    </alternativeName>
</protein>
<gene>
    <name evidence="1" type="primary">prcB</name>
    <name type="ordered locus">Caci_2426</name>
</gene>
<evidence type="ECO:0000255" key="1">
    <source>
        <dbReference type="HAMAP-Rule" id="MF_02113"/>
    </source>
</evidence>
<organism>
    <name type="scientific">Catenulispora acidiphila (strain DSM 44928 / JCM 14897 / NBRC 102108 / NRRL B-24433 / ID139908)</name>
    <dbReference type="NCBI Taxonomy" id="479433"/>
    <lineage>
        <taxon>Bacteria</taxon>
        <taxon>Bacillati</taxon>
        <taxon>Actinomycetota</taxon>
        <taxon>Actinomycetes</taxon>
        <taxon>Catenulisporales</taxon>
        <taxon>Catenulisporaceae</taxon>
        <taxon>Catenulispora</taxon>
    </lineage>
</organism>
<reference key="1">
    <citation type="journal article" date="2009" name="Stand. Genomic Sci.">
        <title>Complete genome sequence of Catenulispora acidiphila type strain (ID 139908).</title>
        <authorList>
            <person name="Copeland A."/>
            <person name="Lapidus A."/>
            <person name="Glavina Del Rio T."/>
            <person name="Nolan M."/>
            <person name="Lucas S."/>
            <person name="Chen F."/>
            <person name="Tice H."/>
            <person name="Cheng J.F."/>
            <person name="Bruce D."/>
            <person name="Goodwin L."/>
            <person name="Pitluck S."/>
            <person name="Mikhailova N."/>
            <person name="Pati A."/>
            <person name="Ivanova N."/>
            <person name="Mavromatis K."/>
            <person name="Chen A."/>
            <person name="Palaniappan K."/>
            <person name="Chain P."/>
            <person name="Land M."/>
            <person name="Hauser L."/>
            <person name="Chang Y.J."/>
            <person name="Jeffries C.D."/>
            <person name="Chertkov O."/>
            <person name="Brettin T."/>
            <person name="Detter J.C."/>
            <person name="Han C."/>
            <person name="Ali Z."/>
            <person name="Tindall B.J."/>
            <person name="Goker M."/>
            <person name="Bristow J."/>
            <person name="Eisen J.A."/>
            <person name="Markowitz V."/>
            <person name="Hugenholtz P."/>
            <person name="Kyrpides N.C."/>
            <person name="Klenk H.P."/>
        </authorList>
    </citation>
    <scope>NUCLEOTIDE SEQUENCE [LARGE SCALE GENOMIC DNA]</scope>
    <source>
        <strain>DSM 44928 / JCM 14897 / NBRC 102108 / NRRL B-24433 / ID139908</strain>
    </source>
</reference>
<accession>C7PVV2</accession>